<evidence type="ECO:0000269" key="1">
    <source>
    </source>
</evidence>
<evidence type="ECO:0000305" key="2"/>
<evidence type="ECO:0000305" key="3">
    <source>
    </source>
</evidence>
<evidence type="ECO:0007829" key="4">
    <source>
        <dbReference type="PDB" id="2PFU"/>
    </source>
</evidence>
<evidence type="ECO:0007829" key="5">
    <source>
        <dbReference type="PDB" id="6TYI"/>
    </source>
</evidence>
<evidence type="ECO:0007829" key="6">
    <source>
        <dbReference type="PDB" id="8VGC"/>
    </source>
</evidence>
<dbReference type="EMBL" id="M28819">
    <property type="protein sequence ID" value="AAA23733.1"/>
    <property type="molecule type" value="Genomic_DNA"/>
</dbReference>
<dbReference type="EMBL" id="U28377">
    <property type="protein sequence ID" value="AAA69172.1"/>
    <property type="molecule type" value="Genomic_DNA"/>
</dbReference>
<dbReference type="EMBL" id="U00096">
    <property type="protein sequence ID" value="AAC76041.1"/>
    <property type="molecule type" value="Genomic_DNA"/>
</dbReference>
<dbReference type="EMBL" id="AP009048">
    <property type="protein sequence ID" value="BAE77063.1"/>
    <property type="molecule type" value="Genomic_DNA"/>
</dbReference>
<dbReference type="PIR" id="JV0030">
    <property type="entry name" value="BVECED"/>
</dbReference>
<dbReference type="RefSeq" id="NP_417478.1">
    <property type="nucleotide sequence ID" value="NC_000913.3"/>
</dbReference>
<dbReference type="RefSeq" id="WP_001240712.1">
    <property type="nucleotide sequence ID" value="NZ_STEB01000001.1"/>
</dbReference>
<dbReference type="PDB" id="2PFU">
    <property type="method" value="NMR"/>
    <property type="chains" value="A=44-141"/>
</dbReference>
<dbReference type="PDB" id="5SV1">
    <property type="method" value="X-ray"/>
    <property type="resolution" value="3.50 A"/>
    <property type="chains" value="Y/Z=1-49"/>
</dbReference>
<dbReference type="PDB" id="5ZFU">
    <property type="method" value="EM"/>
    <property type="resolution" value="6.70 A"/>
    <property type="chains" value="G/H/I=19-40"/>
</dbReference>
<dbReference type="PDB" id="5ZFV">
    <property type="method" value="EM"/>
    <property type="resolution" value="7.10 A"/>
    <property type="chains" value="F=19-40"/>
</dbReference>
<dbReference type="PDB" id="6TYI">
    <property type="method" value="EM"/>
    <property type="resolution" value="3.30 A"/>
    <property type="chains" value="Y/Z=1-141"/>
</dbReference>
<dbReference type="PDB" id="8P9R">
    <property type="method" value="X-ray"/>
    <property type="resolution" value="1.52 A"/>
    <property type="chains" value="A/B=61-141"/>
</dbReference>
<dbReference type="PDB" id="8VGC">
    <property type="method" value="X-ray"/>
    <property type="resolution" value="1.42 A"/>
    <property type="chains" value="A/B=59-141"/>
</dbReference>
<dbReference type="PDB" id="8VGD">
    <property type="method" value="X-ray"/>
    <property type="resolution" value="1.42 A"/>
    <property type="chains" value="A/B=59-141"/>
</dbReference>
<dbReference type="PDBsum" id="2PFU"/>
<dbReference type="PDBsum" id="5SV1"/>
<dbReference type="PDBsum" id="5ZFU"/>
<dbReference type="PDBsum" id="5ZFV"/>
<dbReference type="PDBsum" id="6TYI"/>
<dbReference type="PDBsum" id="8P9R"/>
<dbReference type="PDBsum" id="8VGC"/>
<dbReference type="PDBsum" id="8VGD"/>
<dbReference type="BMRB" id="P0ABV2"/>
<dbReference type="EMDB" id="EMD-20583"/>
<dbReference type="EMDB" id="EMD-2859"/>
<dbReference type="EMDB" id="EMD-2934"/>
<dbReference type="EMDB" id="EMD-2935"/>
<dbReference type="EMDB" id="EMD-5901"/>
<dbReference type="EMDB" id="EMD-5902"/>
<dbReference type="EMDB" id="EMD-5903"/>
<dbReference type="EMDB" id="EMD-6927"/>
<dbReference type="EMDB" id="EMD-6928"/>
<dbReference type="SMR" id="P0ABV2"/>
<dbReference type="BioGRID" id="4261413">
    <property type="interactions" value="269"/>
</dbReference>
<dbReference type="BioGRID" id="850702">
    <property type="interactions" value="2"/>
</dbReference>
<dbReference type="ComplexPortal" id="CPX-1083">
    <property type="entry name" value="Cobalamin outer membrane transporter complex"/>
</dbReference>
<dbReference type="ComplexPortal" id="CPX-2843">
    <property type="entry name" value="Ferrichrome outer membrane transporter complex"/>
</dbReference>
<dbReference type="ComplexPortal" id="CPX-3576">
    <property type="entry name" value="Ferric-citrate outer membrane transporter complex"/>
</dbReference>
<dbReference type="ComplexPortal" id="CPX-3577">
    <property type="entry name" value="Ferric-catecholate outer membrane transporter complex"/>
</dbReference>
<dbReference type="ComplexPortal" id="CPX-3578">
    <property type="entry name" value="Ferric-enterobactin outer membrane transporter complex"/>
</dbReference>
<dbReference type="ComplexPortal" id="CPX-3579">
    <property type="entry name" value="Ferric-coprogen outer membrane transporter complex"/>
</dbReference>
<dbReference type="ComplexPortal" id="CPX-3580">
    <property type="entry name" value="fiu outer membrane transporter complex"/>
</dbReference>
<dbReference type="ComplexPortal" id="CPX-3585">
    <property type="entry name" value="Uncharacterized yncD-DHBS outer membrane transporter complex"/>
</dbReference>
<dbReference type="DIP" id="DIP-47973N"/>
<dbReference type="FunCoup" id="P0ABV2">
    <property type="interactions" value="269"/>
</dbReference>
<dbReference type="IntAct" id="P0ABV2">
    <property type="interactions" value="4"/>
</dbReference>
<dbReference type="STRING" id="511145.b3005"/>
<dbReference type="TCDB" id="1.A.30.2.1">
    <property type="family name" value="the h(+)- or na(+)-translocating bacterial flagellar motor/exbbd outer membrane transport energizer (mot/exb) superfamily"/>
</dbReference>
<dbReference type="jPOST" id="P0ABV2"/>
<dbReference type="PaxDb" id="511145-b3005"/>
<dbReference type="EnsemblBacteria" id="AAC76041">
    <property type="protein sequence ID" value="AAC76041"/>
    <property type="gene ID" value="b3005"/>
</dbReference>
<dbReference type="GeneID" id="93778982"/>
<dbReference type="GeneID" id="946345"/>
<dbReference type="KEGG" id="ecj:JW2973"/>
<dbReference type="KEGG" id="eco:b3005"/>
<dbReference type="KEGG" id="ecoc:C3026_16425"/>
<dbReference type="PATRIC" id="fig|1411691.4.peg.3724"/>
<dbReference type="EchoBASE" id="EB0268"/>
<dbReference type="eggNOG" id="COG0848">
    <property type="taxonomic scope" value="Bacteria"/>
</dbReference>
<dbReference type="HOGENOM" id="CLU_085305_1_3_6"/>
<dbReference type="InParanoid" id="P0ABV2"/>
<dbReference type="OMA" id="PYGLVMD"/>
<dbReference type="OrthoDB" id="9798629at2"/>
<dbReference type="PhylomeDB" id="P0ABV2"/>
<dbReference type="BioCyc" id="EcoCyc:EG10272-MONOMER"/>
<dbReference type="BioCyc" id="MetaCyc:EG10272-MONOMER"/>
<dbReference type="EvolutionaryTrace" id="P0ABV2"/>
<dbReference type="PRO" id="PR:P0ABV2"/>
<dbReference type="Proteomes" id="UP000000625">
    <property type="component" value="Chromosome"/>
</dbReference>
<dbReference type="GO" id="GO:0009279">
    <property type="term" value="C:cell outer membrane"/>
    <property type="evidence" value="ECO:0000303"/>
    <property type="project" value="ComplexPortal"/>
</dbReference>
<dbReference type="GO" id="GO:0016020">
    <property type="term" value="C:membrane"/>
    <property type="evidence" value="ECO:0000303"/>
    <property type="project" value="ComplexPortal"/>
</dbReference>
<dbReference type="GO" id="GO:0005886">
    <property type="term" value="C:plasma membrane"/>
    <property type="evidence" value="ECO:0000314"/>
    <property type="project" value="EcoCyc"/>
</dbReference>
<dbReference type="GO" id="GO:0098797">
    <property type="term" value="C:plasma membrane protein complex"/>
    <property type="evidence" value="ECO:0000314"/>
    <property type="project" value="EcoCyc"/>
</dbReference>
<dbReference type="GO" id="GO:1902495">
    <property type="term" value="C:transmembrane transporter complex"/>
    <property type="evidence" value="ECO:0000303"/>
    <property type="project" value="ComplexPortal"/>
</dbReference>
<dbReference type="GO" id="GO:0031992">
    <property type="term" value="F:energy transducer activity"/>
    <property type="evidence" value="ECO:0000315"/>
    <property type="project" value="EcoCyc"/>
</dbReference>
<dbReference type="GO" id="GO:0042802">
    <property type="term" value="F:identical protein binding"/>
    <property type="evidence" value="ECO:0000353"/>
    <property type="project" value="IntAct"/>
</dbReference>
<dbReference type="GO" id="GO:0042803">
    <property type="term" value="F:protein homodimerization activity"/>
    <property type="evidence" value="ECO:0000314"/>
    <property type="project" value="EcoCyc"/>
</dbReference>
<dbReference type="GO" id="GO:0022857">
    <property type="term" value="F:transmembrane transporter activity"/>
    <property type="evidence" value="ECO:0007669"/>
    <property type="project" value="InterPro"/>
</dbReference>
<dbReference type="GO" id="GO:0043213">
    <property type="term" value="P:bacteriocin transport"/>
    <property type="evidence" value="ECO:0007669"/>
    <property type="project" value="UniProtKB-KW"/>
</dbReference>
<dbReference type="GO" id="GO:0015889">
    <property type="term" value="P:cobalamin transport"/>
    <property type="evidence" value="ECO:0000303"/>
    <property type="project" value="ComplexPortal"/>
</dbReference>
<dbReference type="GO" id="GO:0006879">
    <property type="term" value="P:intracellular iron ion homeostasis"/>
    <property type="evidence" value="ECO:0000303"/>
    <property type="project" value="ComplexPortal"/>
</dbReference>
<dbReference type="GO" id="GO:0030003">
    <property type="term" value="P:intracellular monoatomic cation homeostasis"/>
    <property type="evidence" value="ECO:0000303"/>
    <property type="project" value="ComplexPortal"/>
</dbReference>
<dbReference type="GO" id="GO:0050821">
    <property type="term" value="P:protein stabilization"/>
    <property type="evidence" value="ECO:0000315"/>
    <property type="project" value="EcoCyc"/>
</dbReference>
<dbReference type="GO" id="GO:0015031">
    <property type="term" value="P:protein transport"/>
    <property type="evidence" value="ECO:0007669"/>
    <property type="project" value="UniProtKB-KW"/>
</dbReference>
<dbReference type="FunFam" id="3.30.420.270:FF:000002">
    <property type="entry name" value="TonB system transport protein ExbD"/>
    <property type="match status" value="1"/>
</dbReference>
<dbReference type="Gene3D" id="3.30.420.270">
    <property type="match status" value="1"/>
</dbReference>
<dbReference type="InterPro" id="IPR003400">
    <property type="entry name" value="ExbD"/>
</dbReference>
<dbReference type="InterPro" id="IPR014170">
    <property type="entry name" value="TonB_ExbD_1"/>
</dbReference>
<dbReference type="NCBIfam" id="TIGR02803">
    <property type="entry name" value="ExbD_1"/>
    <property type="match status" value="1"/>
</dbReference>
<dbReference type="NCBIfam" id="NF008429">
    <property type="entry name" value="PRK11267.1"/>
    <property type="match status" value="1"/>
</dbReference>
<dbReference type="PANTHER" id="PTHR30558:SF9">
    <property type="entry name" value="BIOPOLYMER TRANSPORT PROTEIN EXBD"/>
    <property type="match status" value="1"/>
</dbReference>
<dbReference type="PANTHER" id="PTHR30558">
    <property type="entry name" value="EXBD MEMBRANE COMPONENT OF PMF-DRIVEN MACROMOLECULE IMPORT SYSTEM"/>
    <property type="match status" value="1"/>
</dbReference>
<dbReference type="Pfam" id="PF02472">
    <property type="entry name" value="ExbD"/>
    <property type="match status" value="1"/>
</dbReference>
<organism>
    <name type="scientific">Escherichia coli (strain K12)</name>
    <dbReference type="NCBI Taxonomy" id="83333"/>
    <lineage>
        <taxon>Bacteria</taxon>
        <taxon>Pseudomonadati</taxon>
        <taxon>Pseudomonadota</taxon>
        <taxon>Gammaproteobacteria</taxon>
        <taxon>Enterobacterales</taxon>
        <taxon>Enterobacteriaceae</taxon>
        <taxon>Escherichia</taxon>
    </lineage>
</organism>
<name>EXBD_ECOLI</name>
<sequence length="141" mass="15527">MAMHLNENLDDNGEMHDINVTPFIDVMLVLLIIFMVAAPLATVDVKVNLPASTSTPQPRPEKPVYLSVKADNSMFIGNDPVTDETMITALNALTEGKKDTTIFFRADKTVDYETLMKVMDTLHQAGYLKIGLVGEETAKAK</sequence>
<accession>P0ABV2</accession>
<accession>P18784</accession>
<accession>Q2M9J3</accession>
<keyword id="KW-0002">3D-structure</keyword>
<keyword id="KW-0080">Bacteriocin transport</keyword>
<keyword id="KW-0997">Cell inner membrane</keyword>
<keyword id="KW-1003">Cell membrane</keyword>
<keyword id="KW-0472">Membrane</keyword>
<keyword id="KW-0653">Protein transport</keyword>
<keyword id="KW-1185">Reference proteome</keyword>
<keyword id="KW-0735">Signal-anchor</keyword>
<keyword id="KW-0812">Transmembrane</keyword>
<keyword id="KW-1133">Transmembrane helix</keyword>
<keyword id="KW-0813">Transport</keyword>
<protein>
    <recommendedName>
        <fullName>Biopolymer transport protein ExbD</fullName>
    </recommendedName>
</protein>
<proteinExistence type="evidence at protein level"/>
<comment type="function">
    <text>Involved in the TonB-dependent energy-dependent transport of various receptor-bound substrates.</text>
</comment>
<comment type="subunit">
    <text>The accessory proteins ExbB and ExbD seem to form a complex with TonB.</text>
</comment>
<comment type="interaction">
    <interactant intactId="EBI-6417016">
        <id>P0ABV2</id>
    </interactant>
    <interactant intactId="EBI-6399986">
        <id>P0ABU7</id>
        <label>exbB</label>
    </interactant>
    <organismsDiffer>false</organismsDiffer>
    <experiments>7</experiments>
</comment>
<comment type="interaction">
    <interactant intactId="EBI-6417016">
        <id>P0ABV2</id>
    </interactant>
    <interactant intactId="EBI-6417016">
        <id>P0ABV2</id>
        <label>exbD</label>
    </interactant>
    <organismsDiffer>false</organismsDiffer>
    <experiments>3</experiments>
</comment>
<comment type="interaction">
    <interactant intactId="EBI-6417016">
        <id>P0ABV2</id>
    </interactant>
    <interactant intactId="EBI-6399993">
        <id>P02929</id>
        <label>tonB</label>
    </interactant>
    <organismsDiffer>false</organismsDiffer>
    <experiments>3</experiments>
</comment>
<comment type="subcellular location">
    <subcellularLocation>
        <location>Cell inner membrane</location>
        <topology>Single-pass type II membrane protein</topology>
    </subcellularLocation>
</comment>
<comment type="induction">
    <text evidence="1">Induced 2.1-fold by hydroxyurea.</text>
</comment>
<comment type="similarity">
    <text evidence="2">Belongs to the ExbD/TolR family.</text>
</comment>
<feature type="chain" id="PRO_0000129117" description="Biopolymer transport protein ExbD">
    <location>
        <begin position="1"/>
        <end position="141"/>
    </location>
</feature>
<feature type="topological domain" description="Cytoplasmic" evidence="3">
    <location>
        <begin position="1"/>
        <end position="22"/>
    </location>
</feature>
<feature type="transmembrane region" description="Helical; Signal-anchor for type II membrane protein" evidence="2">
    <location>
        <begin position="23"/>
        <end position="43"/>
    </location>
</feature>
<feature type="topological domain" description="Periplasmic" evidence="3">
    <location>
        <begin position="44"/>
        <end position="141"/>
    </location>
</feature>
<feature type="helix" evidence="5">
    <location>
        <begin position="21"/>
        <end position="36"/>
    </location>
</feature>
<feature type="helix" evidence="5">
    <location>
        <begin position="39"/>
        <end position="41"/>
    </location>
</feature>
<feature type="strand" evidence="6">
    <location>
        <begin position="64"/>
        <end position="68"/>
    </location>
</feature>
<feature type="turn" evidence="4">
    <location>
        <begin position="70"/>
        <end position="72"/>
    </location>
</feature>
<feature type="strand" evidence="6">
    <location>
        <begin position="74"/>
        <end position="76"/>
    </location>
</feature>
<feature type="strand" evidence="6">
    <location>
        <begin position="79"/>
        <end position="81"/>
    </location>
</feature>
<feature type="turn" evidence="6">
    <location>
        <begin position="83"/>
        <end position="85"/>
    </location>
</feature>
<feature type="helix" evidence="6">
    <location>
        <begin position="86"/>
        <end position="94"/>
    </location>
</feature>
<feature type="strand" evidence="6">
    <location>
        <begin position="102"/>
        <end position="106"/>
    </location>
</feature>
<feature type="helix" evidence="6">
    <location>
        <begin position="112"/>
        <end position="124"/>
    </location>
</feature>
<feature type="strand" evidence="6">
    <location>
        <begin position="130"/>
        <end position="133"/>
    </location>
</feature>
<reference key="1">
    <citation type="journal article" date="1989" name="J. Bacteriol.">
        <title>Import of biopolymers into Escherichia coli: nucleotide sequences of the exbB and exbD genes are homologous to those of the tolQ and tolR genes, respectively.</title>
        <authorList>
            <person name="Eick-Helmerich K."/>
            <person name="Braun V."/>
        </authorList>
    </citation>
    <scope>NUCLEOTIDE SEQUENCE [GENOMIC DNA]</scope>
    <source>
        <strain>K12</strain>
    </source>
</reference>
<reference key="2">
    <citation type="journal article" date="1997" name="Science">
        <title>The complete genome sequence of Escherichia coli K-12.</title>
        <authorList>
            <person name="Blattner F.R."/>
            <person name="Plunkett G. III"/>
            <person name="Bloch C.A."/>
            <person name="Perna N.T."/>
            <person name="Burland V."/>
            <person name="Riley M."/>
            <person name="Collado-Vides J."/>
            <person name="Glasner J.D."/>
            <person name="Rode C.K."/>
            <person name="Mayhew G.F."/>
            <person name="Gregor J."/>
            <person name="Davis N.W."/>
            <person name="Kirkpatrick H.A."/>
            <person name="Goeden M.A."/>
            <person name="Rose D.J."/>
            <person name="Mau B."/>
            <person name="Shao Y."/>
        </authorList>
    </citation>
    <scope>NUCLEOTIDE SEQUENCE [LARGE SCALE GENOMIC DNA]</scope>
    <source>
        <strain>K12 / MG1655 / ATCC 47076</strain>
    </source>
</reference>
<reference key="3">
    <citation type="journal article" date="2006" name="Mol. Syst. Biol.">
        <title>Highly accurate genome sequences of Escherichia coli K-12 strains MG1655 and W3110.</title>
        <authorList>
            <person name="Hayashi K."/>
            <person name="Morooka N."/>
            <person name="Yamamoto Y."/>
            <person name="Fujita K."/>
            <person name="Isono K."/>
            <person name="Choi S."/>
            <person name="Ohtsubo E."/>
            <person name="Baba T."/>
            <person name="Wanner B.L."/>
            <person name="Mori H."/>
            <person name="Horiuchi T."/>
        </authorList>
    </citation>
    <scope>NUCLEOTIDE SEQUENCE [LARGE SCALE GENOMIC DNA]</scope>
    <source>
        <strain>K12 / W3110 / ATCC 27325 / DSM 5911</strain>
    </source>
</reference>
<reference key="4">
    <citation type="journal article" date="1992" name="J. Bacteriol.">
        <title>Membrane topology of the Escherichia coli ExbD protein.</title>
        <authorList>
            <person name="Kampfenkel K."/>
            <person name="Braun V."/>
        </authorList>
    </citation>
    <scope>TOPOLOGY</scope>
</reference>
<reference key="5">
    <citation type="journal article" date="2009" name="Mol. Cell">
        <title>Hydroxyurea induces hydroxyl radical-mediated cell death in Escherichia coli.</title>
        <authorList>
            <person name="Davies B.W."/>
            <person name="Kohanski M.A."/>
            <person name="Simmons L.A."/>
            <person name="Winkler J.A."/>
            <person name="Collins J.J."/>
            <person name="Walker G.C."/>
        </authorList>
    </citation>
    <scope>INDUCTION BY HYDROXYUREA</scope>
    <source>
        <strain>K12 / MC4100 / ATCC 35695 / DSM 6574</strain>
    </source>
</reference>
<gene>
    <name type="primary">exbD</name>
    <name type="ordered locus">b3005</name>
    <name type="ordered locus">JW2973</name>
</gene>